<accession>A4VRK8</accession>
<protein>
    <recommendedName>
        <fullName evidence="1">Biosynthetic peptidoglycan transglycosylase</fullName>
        <ecNumber evidence="1">2.4.99.28</ecNumber>
    </recommendedName>
    <alternativeName>
        <fullName evidence="1">Glycan polymerase</fullName>
    </alternativeName>
    <alternativeName>
        <fullName evidence="1">Peptidoglycan glycosyltransferase MtgA</fullName>
        <shortName evidence="1">PGT</shortName>
    </alternativeName>
</protein>
<comment type="function">
    <text evidence="1">Peptidoglycan polymerase that catalyzes glycan chain elongation from lipid-linked precursors.</text>
</comment>
<comment type="catalytic activity">
    <reaction evidence="1">
        <text>[GlcNAc-(1-&gt;4)-Mur2Ac(oyl-L-Ala-gamma-D-Glu-L-Lys-D-Ala-D-Ala)](n)-di-trans,octa-cis-undecaprenyl diphosphate + beta-D-GlcNAc-(1-&gt;4)-Mur2Ac(oyl-L-Ala-gamma-D-Glu-L-Lys-D-Ala-D-Ala)-di-trans,octa-cis-undecaprenyl diphosphate = [GlcNAc-(1-&gt;4)-Mur2Ac(oyl-L-Ala-gamma-D-Glu-L-Lys-D-Ala-D-Ala)](n+1)-di-trans,octa-cis-undecaprenyl diphosphate + di-trans,octa-cis-undecaprenyl diphosphate + H(+)</text>
        <dbReference type="Rhea" id="RHEA:23708"/>
        <dbReference type="Rhea" id="RHEA-COMP:9602"/>
        <dbReference type="Rhea" id="RHEA-COMP:9603"/>
        <dbReference type="ChEBI" id="CHEBI:15378"/>
        <dbReference type="ChEBI" id="CHEBI:58405"/>
        <dbReference type="ChEBI" id="CHEBI:60033"/>
        <dbReference type="ChEBI" id="CHEBI:78435"/>
        <dbReference type="EC" id="2.4.99.28"/>
    </reaction>
</comment>
<comment type="pathway">
    <text evidence="1">Cell wall biogenesis; peptidoglycan biosynthesis.</text>
</comment>
<comment type="subcellular location">
    <subcellularLocation>
        <location evidence="1">Cell inner membrane</location>
        <topology evidence="1">Single-pass membrane protein</topology>
    </subcellularLocation>
</comment>
<comment type="similarity">
    <text evidence="1">Belongs to the glycosyltransferase 51 family.</text>
</comment>
<organism>
    <name type="scientific">Stutzerimonas stutzeri (strain A1501)</name>
    <name type="common">Pseudomonas stutzeri</name>
    <dbReference type="NCBI Taxonomy" id="379731"/>
    <lineage>
        <taxon>Bacteria</taxon>
        <taxon>Pseudomonadati</taxon>
        <taxon>Pseudomonadota</taxon>
        <taxon>Gammaproteobacteria</taxon>
        <taxon>Pseudomonadales</taxon>
        <taxon>Pseudomonadaceae</taxon>
        <taxon>Stutzerimonas</taxon>
    </lineage>
</organism>
<name>MTGA_STUS1</name>
<reference key="1">
    <citation type="journal article" date="2008" name="Proc. Natl. Acad. Sci. U.S.A.">
        <title>Nitrogen fixation island and rhizosphere competence traits in the genome of root-associated Pseudomonas stutzeri A1501.</title>
        <authorList>
            <person name="Yan Y."/>
            <person name="Yang J."/>
            <person name="Dou Y."/>
            <person name="Chen M."/>
            <person name="Ping S."/>
            <person name="Peng J."/>
            <person name="Lu W."/>
            <person name="Zhang W."/>
            <person name="Yao Z."/>
            <person name="Li H."/>
            <person name="Liu W."/>
            <person name="He S."/>
            <person name="Geng L."/>
            <person name="Zhang X."/>
            <person name="Yang F."/>
            <person name="Yu H."/>
            <person name="Zhan Y."/>
            <person name="Li D."/>
            <person name="Lin Z."/>
            <person name="Wang Y."/>
            <person name="Elmerich C."/>
            <person name="Lin M."/>
            <person name="Jin Q."/>
        </authorList>
    </citation>
    <scope>NUCLEOTIDE SEQUENCE [LARGE SCALE GENOMIC DNA]</scope>
    <source>
        <strain>A1501</strain>
    </source>
</reference>
<proteinExistence type="inferred from homology"/>
<sequence length="242" mass="27823">MLRNLLLRLSKLLLWLIALSVLLVLLLRWVPPPFTALMIERKIESWRTGEAIDLTREWRPWRELPDDLKMAVIAAEDQKFADHWGFDVAAIRAALSHNERGGSLRGASTLSQQVAKNLFLWSGRSWPRKGLEAWFTALIELMWPKQRILEVYLNSVEWGDGIFGAQAAAQHHFGTGAPYLSAHQASLLAAVLPNPRQWSAGKPSRYVNNRAAWIRQQMRQLGGSHYLQRIKPNHPEWWPSWL</sequence>
<keyword id="KW-0997">Cell inner membrane</keyword>
<keyword id="KW-1003">Cell membrane</keyword>
<keyword id="KW-0133">Cell shape</keyword>
<keyword id="KW-0961">Cell wall biogenesis/degradation</keyword>
<keyword id="KW-0328">Glycosyltransferase</keyword>
<keyword id="KW-0472">Membrane</keyword>
<keyword id="KW-0573">Peptidoglycan synthesis</keyword>
<keyword id="KW-1185">Reference proteome</keyword>
<keyword id="KW-0808">Transferase</keyword>
<keyword id="KW-0812">Transmembrane</keyword>
<keyword id="KW-1133">Transmembrane helix</keyword>
<feature type="chain" id="PRO_1000017314" description="Biosynthetic peptidoglycan transglycosylase">
    <location>
        <begin position="1"/>
        <end position="242"/>
    </location>
</feature>
<feature type="transmembrane region" description="Helical" evidence="1">
    <location>
        <begin position="12"/>
        <end position="32"/>
    </location>
</feature>
<evidence type="ECO:0000255" key="1">
    <source>
        <dbReference type="HAMAP-Rule" id="MF_00766"/>
    </source>
</evidence>
<dbReference type="EC" id="2.4.99.28" evidence="1"/>
<dbReference type="EMBL" id="CP000304">
    <property type="protein sequence ID" value="ABP81609.1"/>
    <property type="molecule type" value="Genomic_DNA"/>
</dbReference>
<dbReference type="RefSeq" id="WP_011914991.1">
    <property type="nucleotide sequence ID" value="NC_009434.1"/>
</dbReference>
<dbReference type="SMR" id="A4VRK8"/>
<dbReference type="CAZy" id="GT51">
    <property type="family name" value="Glycosyltransferase Family 51"/>
</dbReference>
<dbReference type="KEGG" id="psa:PST_3986"/>
<dbReference type="eggNOG" id="COG0744">
    <property type="taxonomic scope" value="Bacteria"/>
</dbReference>
<dbReference type="HOGENOM" id="CLU_006354_1_1_6"/>
<dbReference type="UniPathway" id="UPA00219"/>
<dbReference type="Proteomes" id="UP000000233">
    <property type="component" value="Chromosome"/>
</dbReference>
<dbReference type="GO" id="GO:0009274">
    <property type="term" value="C:peptidoglycan-based cell wall"/>
    <property type="evidence" value="ECO:0007669"/>
    <property type="project" value="InterPro"/>
</dbReference>
<dbReference type="GO" id="GO:0005886">
    <property type="term" value="C:plasma membrane"/>
    <property type="evidence" value="ECO:0007669"/>
    <property type="project" value="UniProtKB-SubCell"/>
</dbReference>
<dbReference type="GO" id="GO:0016763">
    <property type="term" value="F:pentosyltransferase activity"/>
    <property type="evidence" value="ECO:0007669"/>
    <property type="project" value="InterPro"/>
</dbReference>
<dbReference type="GO" id="GO:0008955">
    <property type="term" value="F:peptidoglycan glycosyltransferase activity"/>
    <property type="evidence" value="ECO:0007669"/>
    <property type="project" value="UniProtKB-UniRule"/>
</dbReference>
<dbReference type="GO" id="GO:0071555">
    <property type="term" value="P:cell wall organization"/>
    <property type="evidence" value="ECO:0007669"/>
    <property type="project" value="UniProtKB-KW"/>
</dbReference>
<dbReference type="GO" id="GO:0009252">
    <property type="term" value="P:peptidoglycan biosynthetic process"/>
    <property type="evidence" value="ECO:0007669"/>
    <property type="project" value="UniProtKB-UniRule"/>
</dbReference>
<dbReference type="GO" id="GO:0008360">
    <property type="term" value="P:regulation of cell shape"/>
    <property type="evidence" value="ECO:0007669"/>
    <property type="project" value="UniProtKB-KW"/>
</dbReference>
<dbReference type="Gene3D" id="1.10.3810.10">
    <property type="entry name" value="Biosynthetic peptidoglycan transglycosylase-like"/>
    <property type="match status" value="1"/>
</dbReference>
<dbReference type="HAMAP" id="MF_00766">
    <property type="entry name" value="PGT_MtgA"/>
    <property type="match status" value="1"/>
</dbReference>
<dbReference type="InterPro" id="IPR001264">
    <property type="entry name" value="Glyco_trans_51"/>
</dbReference>
<dbReference type="InterPro" id="IPR023346">
    <property type="entry name" value="Lysozyme-like_dom_sf"/>
</dbReference>
<dbReference type="InterPro" id="IPR036950">
    <property type="entry name" value="PBP_transglycosylase"/>
</dbReference>
<dbReference type="InterPro" id="IPR011812">
    <property type="entry name" value="Pep_trsgly"/>
</dbReference>
<dbReference type="NCBIfam" id="TIGR02070">
    <property type="entry name" value="mono_pep_trsgly"/>
    <property type="match status" value="1"/>
</dbReference>
<dbReference type="PANTHER" id="PTHR30400:SF0">
    <property type="entry name" value="BIOSYNTHETIC PEPTIDOGLYCAN TRANSGLYCOSYLASE"/>
    <property type="match status" value="1"/>
</dbReference>
<dbReference type="PANTHER" id="PTHR30400">
    <property type="entry name" value="MONOFUNCTIONAL BIOSYNTHETIC PEPTIDOGLYCAN TRANSGLYCOSYLASE"/>
    <property type="match status" value="1"/>
</dbReference>
<dbReference type="Pfam" id="PF00912">
    <property type="entry name" value="Transgly"/>
    <property type="match status" value="1"/>
</dbReference>
<dbReference type="SUPFAM" id="SSF53955">
    <property type="entry name" value="Lysozyme-like"/>
    <property type="match status" value="1"/>
</dbReference>
<gene>
    <name evidence="1" type="primary">mtgA</name>
    <name type="ordered locus">PST_3986</name>
</gene>